<evidence type="ECO:0000256" key="1">
    <source>
        <dbReference type="SAM" id="MobiDB-lite"/>
    </source>
</evidence>
<proteinExistence type="predicted"/>
<accession>P34310</accession>
<keyword id="KW-1185">Reference proteome</keyword>
<name>YKR4_CAEEL</name>
<gene>
    <name type="ORF">C06G4.4</name>
</gene>
<feature type="chain" id="PRO_0000065161" description="Uncharacterized protein C06G4.4">
    <location>
        <begin position="1"/>
        <end position="129"/>
    </location>
</feature>
<feature type="region of interest" description="Disordered" evidence="1">
    <location>
        <begin position="52"/>
        <end position="94"/>
    </location>
</feature>
<feature type="compositionally biased region" description="Acidic residues" evidence="1">
    <location>
        <begin position="53"/>
        <end position="62"/>
    </location>
</feature>
<feature type="compositionally biased region" description="Polar residues" evidence="1">
    <location>
        <begin position="84"/>
        <end position="94"/>
    </location>
</feature>
<sequence>MSEAPKRSEKSADYKKAVAKQRRIKKLRKMKIKDRAGDVVVSDISDVEVVGNGDEESQDDWLNDLLKSDGDGGKAGPVDPSHPMETTTTDHSSQNTLASKICAFTYDNSALLGVGIVTVALSIFARLRK</sequence>
<organism>
    <name type="scientific">Caenorhabditis elegans</name>
    <dbReference type="NCBI Taxonomy" id="6239"/>
    <lineage>
        <taxon>Eukaryota</taxon>
        <taxon>Metazoa</taxon>
        <taxon>Ecdysozoa</taxon>
        <taxon>Nematoda</taxon>
        <taxon>Chromadorea</taxon>
        <taxon>Rhabditida</taxon>
        <taxon>Rhabditina</taxon>
        <taxon>Rhabditomorpha</taxon>
        <taxon>Rhabditoidea</taxon>
        <taxon>Rhabditidae</taxon>
        <taxon>Peloderinae</taxon>
        <taxon>Caenorhabditis</taxon>
    </lineage>
</organism>
<dbReference type="EMBL" id="FO080399">
    <property type="protein sequence ID" value="CCD63436.1"/>
    <property type="molecule type" value="Genomic_DNA"/>
</dbReference>
<dbReference type="PIR" id="S44751">
    <property type="entry name" value="S44751"/>
</dbReference>
<dbReference type="RefSeq" id="NP_498739.1">
    <property type="nucleotide sequence ID" value="NM_066338.4"/>
</dbReference>
<dbReference type="FunCoup" id="P34310">
    <property type="interactions" value="371"/>
</dbReference>
<dbReference type="STRING" id="6239.C06G4.4.1"/>
<dbReference type="PaxDb" id="6239-C06G4.4.1"/>
<dbReference type="PeptideAtlas" id="P34310"/>
<dbReference type="EnsemblMetazoa" id="C06G4.4.1">
    <property type="protein sequence ID" value="C06G4.4.1"/>
    <property type="gene ID" value="WBGene00015558"/>
</dbReference>
<dbReference type="EnsemblMetazoa" id="C06G4.4.2">
    <property type="protein sequence ID" value="C06G4.4.2"/>
    <property type="gene ID" value="WBGene00015558"/>
</dbReference>
<dbReference type="GeneID" id="182344"/>
<dbReference type="KEGG" id="cel:CELE_C06G4.4"/>
<dbReference type="UCSC" id="C06G4.4">
    <property type="organism name" value="c. elegans"/>
</dbReference>
<dbReference type="AGR" id="WB:WBGene00015558"/>
<dbReference type="CTD" id="182344"/>
<dbReference type="WormBase" id="C06G4.4">
    <property type="protein sequence ID" value="CE00549"/>
    <property type="gene ID" value="WBGene00015558"/>
</dbReference>
<dbReference type="eggNOG" id="ENOG502TIB9">
    <property type="taxonomic scope" value="Eukaryota"/>
</dbReference>
<dbReference type="HOGENOM" id="CLU_1846923_0_0_1"/>
<dbReference type="InParanoid" id="P34310"/>
<dbReference type="OMA" id="SQDAWLN"/>
<dbReference type="OrthoDB" id="10432943at2759"/>
<dbReference type="PRO" id="PR:P34310"/>
<dbReference type="Proteomes" id="UP000001940">
    <property type="component" value="Chromosome III"/>
</dbReference>
<dbReference type="Bgee" id="WBGene00015558">
    <property type="expression patterns" value="Expressed in adult organism and 2 other cell types or tissues"/>
</dbReference>
<protein>
    <recommendedName>
        <fullName>Uncharacterized protein C06G4.4</fullName>
    </recommendedName>
</protein>
<reference key="1">
    <citation type="journal article" date="1994" name="Nature">
        <title>2.2 Mb of contiguous nucleotide sequence from chromosome III of C. elegans.</title>
        <authorList>
            <person name="Wilson R."/>
            <person name="Ainscough R."/>
            <person name="Anderson K."/>
            <person name="Baynes C."/>
            <person name="Berks M."/>
            <person name="Bonfield J."/>
            <person name="Burton J."/>
            <person name="Connell M."/>
            <person name="Copsey T."/>
            <person name="Cooper J."/>
            <person name="Coulson A."/>
            <person name="Craxton M."/>
            <person name="Dear S."/>
            <person name="Du Z."/>
            <person name="Durbin R."/>
            <person name="Favello A."/>
            <person name="Fraser A."/>
            <person name="Fulton L."/>
            <person name="Gardner A."/>
            <person name="Green P."/>
            <person name="Hawkins T."/>
            <person name="Hillier L."/>
            <person name="Jier M."/>
            <person name="Johnston L."/>
            <person name="Jones M."/>
            <person name="Kershaw J."/>
            <person name="Kirsten J."/>
            <person name="Laisster N."/>
            <person name="Latreille P."/>
            <person name="Lightning J."/>
            <person name="Lloyd C."/>
            <person name="Mortimore B."/>
            <person name="O'Callaghan M."/>
            <person name="Parsons J."/>
            <person name="Percy C."/>
            <person name="Rifken L."/>
            <person name="Roopra A."/>
            <person name="Saunders D."/>
            <person name="Shownkeen R."/>
            <person name="Sims M."/>
            <person name="Smaldon N."/>
            <person name="Smith A."/>
            <person name="Smith M."/>
            <person name="Sonnhammer E."/>
            <person name="Staden R."/>
            <person name="Sulston J."/>
            <person name="Thierry-Mieg J."/>
            <person name="Thomas K."/>
            <person name="Vaudin M."/>
            <person name="Vaughan K."/>
            <person name="Waterston R."/>
            <person name="Watson A."/>
            <person name="Weinstock L."/>
            <person name="Wilkinson-Sproat J."/>
            <person name="Wohldman P."/>
        </authorList>
    </citation>
    <scope>NUCLEOTIDE SEQUENCE [LARGE SCALE GENOMIC DNA]</scope>
    <source>
        <strain>Bristol N2</strain>
    </source>
</reference>
<reference key="2">
    <citation type="journal article" date="1998" name="Science">
        <title>Genome sequence of the nematode C. elegans: a platform for investigating biology.</title>
        <authorList>
            <consortium name="The C. elegans sequencing consortium"/>
        </authorList>
    </citation>
    <scope>NUCLEOTIDE SEQUENCE [LARGE SCALE GENOMIC DNA]</scope>
    <source>
        <strain>Bristol N2</strain>
    </source>
</reference>